<evidence type="ECO:0000255" key="1">
    <source>
        <dbReference type="HAMAP-Rule" id="MF_01844"/>
    </source>
</evidence>
<name>NHAA_PORG3</name>
<accession>B2RLS8</accession>
<protein>
    <recommendedName>
        <fullName evidence="1">Na(+)/H(+) antiporter NhaA</fullName>
    </recommendedName>
    <alternativeName>
        <fullName evidence="1">Sodium/proton antiporter NhaA</fullName>
    </alternativeName>
</protein>
<sequence>MKQTFRFIKPIERITHLKPNATMMLFLASVLAVIMANSSLSTIYHEILEYPINLTIGGHEVFSHHGETMTLLQFVNDVLMVIFFLAVGLEIKQEILVGELSSFKKAMLPIVGAIGGMIVPVLFFLLVVHEGPGARGAAIPMSTDIAFALAALAVLGSRVPASLKVFLTALAVADDIGGIIVIALFYSSHINIGMLAIAFGILFIMYLMGRMHVSNLGLYFVCTFFVWLFFLQSGIHTTIAGVLAAFMIPARPGLHAKNLRAEMRSLFEAMPNDKIRQSGSSLILSHNQINVINSMRKIARKAISPMQLMEEYLSPIVGYFVLPLFAFANAGITLGGVTADALWGVPMAVFLGLFVGKPLGIYFFTYGFVKMRLCPWPEGMSRLNLMAVSLFGGIGFTVSLFIATLSYAGAEHLLFLNEAKLGIFVASIFAAVVGIVTLRYELNLENAKAQKS</sequence>
<gene>
    <name evidence="1" type="primary">nhaA</name>
    <name type="ordered locus">PGN_1804</name>
</gene>
<reference key="1">
    <citation type="journal article" date="2008" name="DNA Res.">
        <title>Determination of the genome sequence of Porphyromonas gingivalis strain ATCC 33277 and genomic comparison with strain W83 revealed extensive genome rearrangements in P. gingivalis.</title>
        <authorList>
            <person name="Naito M."/>
            <person name="Hirakawa H."/>
            <person name="Yamashita A."/>
            <person name="Ohara N."/>
            <person name="Shoji M."/>
            <person name="Yukitake H."/>
            <person name="Nakayama K."/>
            <person name="Toh H."/>
            <person name="Yoshimura F."/>
            <person name="Kuhara S."/>
            <person name="Hattori M."/>
            <person name="Hayashi T."/>
            <person name="Nakayama K."/>
        </authorList>
    </citation>
    <scope>NUCLEOTIDE SEQUENCE [LARGE SCALE GENOMIC DNA]</scope>
    <source>
        <strain>ATCC 33277 / DSM 20709 / CIP 103683 / JCM 12257 / NCTC 11834 / 2561</strain>
    </source>
</reference>
<keyword id="KW-0050">Antiport</keyword>
<keyword id="KW-0997">Cell inner membrane</keyword>
<keyword id="KW-1003">Cell membrane</keyword>
<keyword id="KW-0406">Ion transport</keyword>
<keyword id="KW-0472">Membrane</keyword>
<keyword id="KW-0915">Sodium</keyword>
<keyword id="KW-0739">Sodium transport</keyword>
<keyword id="KW-0812">Transmembrane</keyword>
<keyword id="KW-1133">Transmembrane helix</keyword>
<keyword id="KW-0813">Transport</keyword>
<organism>
    <name type="scientific">Porphyromonas gingivalis (strain ATCC 33277 / DSM 20709 / CIP 103683 / JCM 12257 / NCTC 11834 / 2561)</name>
    <dbReference type="NCBI Taxonomy" id="431947"/>
    <lineage>
        <taxon>Bacteria</taxon>
        <taxon>Pseudomonadati</taxon>
        <taxon>Bacteroidota</taxon>
        <taxon>Bacteroidia</taxon>
        <taxon>Bacteroidales</taxon>
        <taxon>Porphyromonadaceae</taxon>
        <taxon>Porphyromonas</taxon>
    </lineage>
</organism>
<feature type="chain" id="PRO_1000188439" description="Na(+)/H(+) antiporter NhaA">
    <location>
        <begin position="1"/>
        <end position="452"/>
    </location>
</feature>
<feature type="transmembrane region" description="Helical" evidence="1">
    <location>
        <begin position="23"/>
        <end position="43"/>
    </location>
</feature>
<feature type="transmembrane region" description="Helical" evidence="1">
    <location>
        <begin position="71"/>
        <end position="91"/>
    </location>
</feature>
<feature type="transmembrane region" description="Helical" evidence="1">
    <location>
        <begin position="108"/>
        <end position="128"/>
    </location>
</feature>
<feature type="transmembrane region" description="Helical" evidence="1">
    <location>
        <begin position="136"/>
        <end position="156"/>
    </location>
</feature>
<feature type="transmembrane region" description="Helical" evidence="1">
    <location>
        <begin position="165"/>
        <end position="185"/>
    </location>
</feature>
<feature type="transmembrane region" description="Helical" evidence="1">
    <location>
        <begin position="189"/>
        <end position="209"/>
    </location>
</feature>
<feature type="transmembrane region" description="Helical" evidence="1">
    <location>
        <begin position="216"/>
        <end position="236"/>
    </location>
</feature>
<feature type="transmembrane region" description="Helical" evidence="1">
    <location>
        <begin position="316"/>
        <end position="336"/>
    </location>
</feature>
<feature type="transmembrane region" description="Helical" evidence="1">
    <location>
        <begin position="349"/>
        <end position="369"/>
    </location>
</feature>
<feature type="transmembrane region" description="Helical" evidence="1">
    <location>
        <begin position="385"/>
        <end position="405"/>
    </location>
</feature>
<feature type="transmembrane region" description="Helical" evidence="1">
    <location>
        <begin position="418"/>
        <end position="438"/>
    </location>
</feature>
<dbReference type="EMBL" id="AP009380">
    <property type="protein sequence ID" value="BAG34323.1"/>
    <property type="molecule type" value="Genomic_DNA"/>
</dbReference>
<dbReference type="RefSeq" id="WP_012458544.1">
    <property type="nucleotide sequence ID" value="NZ_CP025930.1"/>
</dbReference>
<dbReference type="SMR" id="B2RLS8"/>
<dbReference type="GeneID" id="29256959"/>
<dbReference type="KEGG" id="pgn:PGN_1804"/>
<dbReference type="eggNOG" id="COG3004">
    <property type="taxonomic scope" value="Bacteria"/>
</dbReference>
<dbReference type="HOGENOM" id="CLU_015803_1_2_10"/>
<dbReference type="OrthoDB" id="9808135at2"/>
<dbReference type="BioCyc" id="PGIN431947:G1G2V-2014-MONOMER"/>
<dbReference type="Proteomes" id="UP000008842">
    <property type="component" value="Chromosome"/>
</dbReference>
<dbReference type="GO" id="GO:0005886">
    <property type="term" value="C:plasma membrane"/>
    <property type="evidence" value="ECO:0007669"/>
    <property type="project" value="UniProtKB-SubCell"/>
</dbReference>
<dbReference type="GO" id="GO:0015385">
    <property type="term" value="F:sodium:proton antiporter activity"/>
    <property type="evidence" value="ECO:0007669"/>
    <property type="project" value="TreeGrafter"/>
</dbReference>
<dbReference type="GO" id="GO:0006885">
    <property type="term" value="P:regulation of pH"/>
    <property type="evidence" value="ECO:0007669"/>
    <property type="project" value="InterPro"/>
</dbReference>
<dbReference type="Gene3D" id="1.20.1530.10">
    <property type="entry name" value="Na+/H+ antiporter like domain"/>
    <property type="match status" value="1"/>
</dbReference>
<dbReference type="HAMAP" id="MF_01844">
    <property type="entry name" value="NhaA"/>
    <property type="match status" value="1"/>
</dbReference>
<dbReference type="InterPro" id="IPR023171">
    <property type="entry name" value="Na/H_antiporter_dom_sf"/>
</dbReference>
<dbReference type="InterPro" id="IPR004670">
    <property type="entry name" value="NhaA"/>
</dbReference>
<dbReference type="NCBIfam" id="TIGR00773">
    <property type="entry name" value="NhaA"/>
    <property type="match status" value="1"/>
</dbReference>
<dbReference type="PANTHER" id="PTHR30341:SF0">
    <property type="entry name" value="NA(+)_H(+) ANTIPORTER NHAA"/>
    <property type="match status" value="1"/>
</dbReference>
<dbReference type="PANTHER" id="PTHR30341">
    <property type="entry name" value="SODIUM ION/PROTON ANTIPORTER NHAA-RELATED"/>
    <property type="match status" value="1"/>
</dbReference>
<dbReference type="Pfam" id="PF06965">
    <property type="entry name" value="Na_H_antiport_1"/>
    <property type="match status" value="1"/>
</dbReference>
<comment type="function">
    <text evidence="1">Na(+)/H(+) antiporter that extrudes sodium in exchange for external protons.</text>
</comment>
<comment type="catalytic activity">
    <reaction evidence="1">
        <text>Na(+)(in) + 2 H(+)(out) = Na(+)(out) + 2 H(+)(in)</text>
        <dbReference type="Rhea" id="RHEA:29251"/>
        <dbReference type="ChEBI" id="CHEBI:15378"/>
        <dbReference type="ChEBI" id="CHEBI:29101"/>
    </reaction>
    <physiologicalReaction direction="left-to-right" evidence="1">
        <dbReference type="Rhea" id="RHEA:29252"/>
    </physiologicalReaction>
</comment>
<comment type="subcellular location">
    <subcellularLocation>
        <location evidence="1">Cell inner membrane</location>
        <topology evidence="1">Multi-pass membrane protein</topology>
    </subcellularLocation>
</comment>
<comment type="similarity">
    <text evidence="1">Belongs to the NhaA Na(+)/H(+) (TC 2.A.33) antiporter family.</text>
</comment>
<proteinExistence type="inferred from homology"/>